<organism>
    <name type="scientific">Salmonella typhi</name>
    <dbReference type="NCBI Taxonomy" id="90370"/>
    <lineage>
        <taxon>Bacteria</taxon>
        <taxon>Pseudomonadati</taxon>
        <taxon>Pseudomonadota</taxon>
        <taxon>Gammaproteobacteria</taxon>
        <taxon>Enterobacterales</taxon>
        <taxon>Enterobacteriaceae</taxon>
        <taxon>Salmonella</taxon>
    </lineage>
</organism>
<name>FABR_SALTI</name>
<protein>
    <recommendedName>
        <fullName evidence="1">HTH-type transcriptional repressor FabR</fullName>
    </recommendedName>
</protein>
<gene>
    <name evidence="1" type="primary">fabR</name>
    <name type="ordered locus">STY3747</name>
    <name type="ordered locus">t3498</name>
</gene>
<dbReference type="EMBL" id="AE014613">
    <property type="protein sequence ID" value="AAO71006.1"/>
    <property type="status" value="ALT_INIT"/>
    <property type="molecule type" value="Genomic_DNA"/>
</dbReference>
<dbReference type="EMBL" id="AL513382">
    <property type="protein sequence ID" value="CAD09503.1"/>
    <property type="status" value="ALT_INIT"/>
    <property type="molecule type" value="Genomic_DNA"/>
</dbReference>
<dbReference type="RefSeq" id="NP_457933.1">
    <property type="nucleotide sequence ID" value="NC_003198.1"/>
</dbReference>
<dbReference type="SMR" id="Q8XGD6"/>
<dbReference type="STRING" id="220341.gene:17587613"/>
<dbReference type="KEGG" id="stt:t3498"/>
<dbReference type="KEGG" id="sty:STY3747"/>
<dbReference type="PATRIC" id="fig|220341.7.peg.3822"/>
<dbReference type="eggNOG" id="COG1309">
    <property type="taxonomic scope" value="Bacteria"/>
</dbReference>
<dbReference type="HOGENOM" id="CLU_081861_0_0_6"/>
<dbReference type="OMA" id="AYWYRKE"/>
<dbReference type="Proteomes" id="UP000000541">
    <property type="component" value="Chromosome"/>
</dbReference>
<dbReference type="Proteomes" id="UP000002670">
    <property type="component" value="Chromosome"/>
</dbReference>
<dbReference type="GO" id="GO:0005737">
    <property type="term" value="C:cytoplasm"/>
    <property type="evidence" value="ECO:0007669"/>
    <property type="project" value="UniProtKB-SubCell"/>
</dbReference>
<dbReference type="GO" id="GO:0003677">
    <property type="term" value="F:DNA binding"/>
    <property type="evidence" value="ECO:0007669"/>
    <property type="project" value="UniProtKB-KW"/>
</dbReference>
<dbReference type="GO" id="GO:0003700">
    <property type="term" value="F:DNA-binding transcription factor activity"/>
    <property type="evidence" value="ECO:0007669"/>
    <property type="project" value="UniProtKB-UniRule"/>
</dbReference>
<dbReference type="GO" id="GO:0006633">
    <property type="term" value="P:fatty acid biosynthetic process"/>
    <property type="evidence" value="ECO:0007669"/>
    <property type="project" value="UniProtKB-UniRule"/>
</dbReference>
<dbReference type="GO" id="GO:0045717">
    <property type="term" value="P:negative regulation of fatty acid biosynthetic process"/>
    <property type="evidence" value="ECO:0007669"/>
    <property type="project" value="UniProtKB-UniRule"/>
</dbReference>
<dbReference type="FunFam" id="1.10.10.60:FF:000034">
    <property type="entry name" value="HTH-type transcriptional repressor FabR"/>
    <property type="match status" value="1"/>
</dbReference>
<dbReference type="FunFam" id="1.10.357.10:FF:000001">
    <property type="entry name" value="HTH-type transcriptional repressor FabR"/>
    <property type="match status" value="1"/>
</dbReference>
<dbReference type="Gene3D" id="1.10.10.60">
    <property type="entry name" value="Homeodomain-like"/>
    <property type="match status" value="1"/>
</dbReference>
<dbReference type="Gene3D" id="1.10.357.10">
    <property type="entry name" value="Tetracycline Repressor, domain 2"/>
    <property type="match status" value="1"/>
</dbReference>
<dbReference type="HAMAP" id="MF_01190">
    <property type="entry name" value="HTH_type_FabR"/>
    <property type="match status" value="1"/>
</dbReference>
<dbReference type="InterPro" id="IPR054129">
    <property type="entry name" value="DesT_TetR_C"/>
</dbReference>
<dbReference type="InterPro" id="IPR009057">
    <property type="entry name" value="Homeodomain-like_sf"/>
</dbReference>
<dbReference type="InterPro" id="IPR001647">
    <property type="entry name" value="HTH_TetR"/>
</dbReference>
<dbReference type="InterPro" id="IPR050692">
    <property type="entry name" value="HTH_transcr_repressor_FabR"/>
</dbReference>
<dbReference type="InterPro" id="IPR023764">
    <property type="entry name" value="Tscrpt_reg_HTH_FabR"/>
</dbReference>
<dbReference type="NCBIfam" id="NF008402">
    <property type="entry name" value="PRK11202.1"/>
    <property type="match status" value="1"/>
</dbReference>
<dbReference type="PANTHER" id="PTHR47752">
    <property type="entry name" value="HTH-TYPE TRANSCRIPTIONAL REPRESSOR FABR"/>
    <property type="match status" value="1"/>
</dbReference>
<dbReference type="PANTHER" id="PTHR47752:SF1">
    <property type="entry name" value="HTH-TYPE TRANSCRIPTIONAL REPRESSOR FABR"/>
    <property type="match status" value="1"/>
</dbReference>
<dbReference type="Pfam" id="PF21943">
    <property type="entry name" value="TetR_C_46"/>
    <property type="match status" value="1"/>
</dbReference>
<dbReference type="Pfam" id="PF00440">
    <property type="entry name" value="TetR_N"/>
    <property type="match status" value="1"/>
</dbReference>
<dbReference type="SUPFAM" id="SSF46689">
    <property type="entry name" value="Homeodomain-like"/>
    <property type="match status" value="1"/>
</dbReference>
<dbReference type="PROSITE" id="PS50977">
    <property type="entry name" value="HTH_TETR_2"/>
    <property type="match status" value="1"/>
</dbReference>
<reference key="1">
    <citation type="journal article" date="2003" name="J. Bacteriol.">
        <title>Comparative genomics of Salmonella enterica serovar Typhi strains Ty2 and CT18.</title>
        <authorList>
            <person name="Deng W."/>
            <person name="Liou S.-R."/>
            <person name="Plunkett G. III"/>
            <person name="Mayhew G.F."/>
            <person name="Rose D.J."/>
            <person name="Burland V."/>
            <person name="Kodoyianni V."/>
            <person name="Schwartz D.C."/>
            <person name="Blattner F.R."/>
        </authorList>
    </citation>
    <scope>NUCLEOTIDE SEQUENCE [LARGE SCALE GENOMIC DNA]</scope>
    <source>
        <strain>ATCC 700931 / Ty2</strain>
    </source>
</reference>
<reference key="2">
    <citation type="journal article" date="2001" name="Nature">
        <title>Complete genome sequence of a multiple drug resistant Salmonella enterica serovar Typhi CT18.</title>
        <authorList>
            <person name="Parkhill J."/>
            <person name="Dougan G."/>
            <person name="James K.D."/>
            <person name="Thomson N.R."/>
            <person name="Pickard D."/>
            <person name="Wain J."/>
            <person name="Churcher C.M."/>
            <person name="Mungall K.L."/>
            <person name="Bentley S.D."/>
            <person name="Holden M.T.G."/>
            <person name="Sebaihia M."/>
            <person name="Baker S."/>
            <person name="Basham D."/>
            <person name="Brooks K."/>
            <person name="Chillingworth T."/>
            <person name="Connerton P."/>
            <person name="Cronin A."/>
            <person name="Davis P."/>
            <person name="Davies R.M."/>
            <person name="Dowd L."/>
            <person name="White N."/>
            <person name="Farrar J."/>
            <person name="Feltwell T."/>
            <person name="Hamlin N."/>
            <person name="Haque A."/>
            <person name="Hien T.T."/>
            <person name="Holroyd S."/>
            <person name="Jagels K."/>
            <person name="Krogh A."/>
            <person name="Larsen T.S."/>
            <person name="Leather S."/>
            <person name="Moule S."/>
            <person name="O'Gaora P."/>
            <person name="Parry C."/>
            <person name="Quail M.A."/>
            <person name="Rutherford K.M."/>
            <person name="Simmonds M."/>
            <person name="Skelton J."/>
            <person name="Stevens K."/>
            <person name="Whitehead S."/>
            <person name="Barrell B.G."/>
        </authorList>
    </citation>
    <scope>NUCLEOTIDE SEQUENCE [LARGE SCALE GENOMIC DNA]</scope>
    <source>
        <strain>CT18</strain>
    </source>
</reference>
<comment type="function">
    <text evidence="1">Represses the transcription of fabB, involved in unsaturated fatty acid (UFA) biosynthesis. By controlling UFA production, FabR directly influences the physical properties of the membrane bilayer.</text>
</comment>
<comment type="subunit">
    <text evidence="1">Homodimer.</text>
</comment>
<comment type="subcellular location">
    <subcellularLocation>
        <location evidence="1">Cytoplasm</location>
    </subcellularLocation>
</comment>
<comment type="sequence caution" evidence="2">
    <conflict type="erroneous initiation">
        <sequence resource="EMBL-CDS" id="AAO71006"/>
    </conflict>
</comment>
<comment type="sequence caution" evidence="2">
    <conflict type="erroneous initiation">
        <sequence resource="EMBL-CDS" id="CAD09503"/>
    </conflict>
</comment>
<evidence type="ECO:0000255" key="1">
    <source>
        <dbReference type="HAMAP-Rule" id="MF_01190"/>
    </source>
</evidence>
<evidence type="ECO:0000305" key="2"/>
<keyword id="KW-0963">Cytoplasm</keyword>
<keyword id="KW-0238">DNA-binding</keyword>
<keyword id="KW-0275">Fatty acid biosynthesis</keyword>
<keyword id="KW-0276">Fatty acid metabolism</keyword>
<keyword id="KW-0444">Lipid biosynthesis</keyword>
<keyword id="KW-0443">Lipid metabolism</keyword>
<keyword id="KW-0678">Repressor</keyword>
<keyword id="KW-0804">Transcription</keyword>
<keyword id="KW-0805">Transcription regulation</keyword>
<feature type="chain" id="PRO_0000293572" description="HTH-type transcriptional repressor FabR">
    <location>
        <begin position="1"/>
        <end position="210"/>
    </location>
</feature>
<feature type="domain" description="HTH tetR-type" evidence="1">
    <location>
        <begin position="10"/>
        <end position="70"/>
    </location>
</feature>
<feature type="DNA-binding region" description="H-T-H motif" evidence="1">
    <location>
        <begin position="33"/>
        <end position="52"/>
    </location>
</feature>
<proteinExistence type="inferred from homology"/>
<sequence>MGVRAQQKEKTRRSLVEAAFSQLSAERSFASLSLREVAREAGIAPTSFYRHFRDVDELGLTMVDESGLMLRQLMRQARQRIAKGGSVIRTSVSTFMEFIGNNPNAFRLLLRERSGTSAAFRAAVAREIQHFIAELADYLELENHMPRAFTEAQAEAMVTIVFSAGAEALDIGAEQRRQLEERLVLQLRMIAKGAYYWYRREQEKIAHHSE</sequence>
<accession>Q8XGD6</accession>
<accession>Q7AM33</accession>